<name>NANR_ECO45</name>
<feature type="chain" id="PRO_1000139719" description="HTH-type transcriptional repressor NanR">
    <location>
        <begin position="1"/>
        <end position="263"/>
    </location>
</feature>
<feature type="domain" description="HTH gntR-type" evidence="1">
    <location>
        <begin position="30"/>
        <end position="98"/>
    </location>
</feature>
<feature type="DNA-binding region" description="H-T-H motif" evidence="1">
    <location>
        <begin position="58"/>
        <end position="77"/>
    </location>
</feature>
<feature type="region of interest" description="Disordered" evidence="2">
    <location>
        <begin position="1"/>
        <end position="23"/>
    </location>
</feature>
<evidence type="ECO:0000255" key="1">
    <source>
        <dbReference type="HAMAP-Rule" id="MF_01236"/>
    </source>
</evidence>
<evidence type="ECO:0000256" key="2">
    <source>
        <dbReference type="SAM" id="MobiDB-lite"/>
    </source>
</evidence>
<gene>
    <name evidence="1" type="primary">nanR</name>
    <name type="ordered locus">ECS88_3603</name>
</gene>
<organism>
    <name type="scientific">Escherichia coli O45:K1 (strain S88 / ExPEC)</name>
    <dbReference type="NCBI Taxonomy" id="585035"/>
    <lineage>
        <taxon>Bacteria</taxon>
        <taxon>Pseudomonadati</taxon>
        <taxon>Pseudomonadota</taxon>
        <taxon>Gammaproteobacteria</taxon>
        <taxon>Enterobacterales</taxon>
        <taxon>Enterobacteriaceae</taxon>
        <taxon>Escherichia</taxon>
    </lineage>
</organism>
<sequence length="263" mass="29536">MSPMNAFDPQAEDSTTTIGRNLRSRPLARKKLSEMVEEELEQMIRRREFGEGEQLPSERELMAFFNVGRPSVREALAALKRKGLVQINNGERARVSRPSADTIIGELSGMAKDFLSHPGGIAHFEQLRLFFESSLVRYAAEHATDEQIDLLAKALEINSQSLDNNAAFIRSDVDFHRVLAEIPGNPIFMAIHVALLDWLIAARPTVADQALHEHNNVSYQQHIAIVDAIRRHDPDEADRALQSHLNSVSATWHAFGQTTNKKK</sequence>
<comment type="function">
    <text evidence="1">Transcriptional repressor that controls expression of the genes required for the catabolism of sialic acids.</text>
</comment>
<comment type="similarity">
    <text evidence="1">Belongs to the NanR family.</text>
</comment>
<protein>
    <recommendedName>
        <fullName evidence="1">HTH-type transcriptional repressor NanR</fullName>
    </recommendedName>
</protein>
<accession>B7MBY8</accession>
<reference key="1">
    <citation type="journal article" date="2009" name="PLoS Genet.">
        <title>Organised genome dynamics in the Escherichia coli species results in highly diverse adaptive paths.</title>
        <authorList>
            <person name="Touchon M."/>
            <person name="Hoede C."/>
            <person name="Tenaillon O."/>
            <person name="Barbe V."/>
            <person name="Baeriswyl S."/>
            <person name="Bidet P."/>
            <person name="Bingen E."/>
            <person name="Bonacorsi S."/>
            <person name="Bouchier C."/>
            <person name="Bouvet O."/>
            <person name="Calteau A."/>
            <person name="Chiapello H."/>
            <person name="Clermont O."/>
            <person name="Cruveiller S."/>
            <person name="Danchin A."/>
            <person name="Diard M."/>
            <person name="Dossat C."/>
            <person name="Karoui M.E."/>
            <person name="Frapy E."/>
            <person name="Garry L."/>
            <person name="Ghigo J.M."/>
            <person name="Gilles A.M."/>
            <person name="Johnson J."/>
            <person name="Le Bouguenec C."/>
            <person name="Lescat M."/>
            <person name="Mangenot S."/>
            <person name="Martinez-Jehanne V."/>
            <person name="Matic I."/>
            <person name="Nassif X."/>
            <person name="Oztas S."/>
            <person name="Petit M.A."/>
            <person name="Pichon C."/>
            <person name="Rouy Z."/>
            <person name="Ruf C.S."/>
            <person name="Schneider D."/>
            <person name="Tourret J."/>
            <person name="Vacherie B."/>
            <person name="Vallenet D."/>
            <person name="Medigue C."/>
            <person name="Rocha E.P.C."/>
            <person name="Denamur E."/>
        </authorList>
    </citation>
    <scope>NUCLEOTIDE SEQUENCE [LARGE SCALE GENOMIC DNA]</scope>
    <source>
        <strain>S88 / ExPEC</strain>
    </source>
</reference>
<proteinExistence type="inferred from homology"/>
<keyword id="KW-0238">DNA-binding</keyword>
<keyword id="KW-1185">Reference proteome</keyword>
<keyword id="KW-0678">Repressor</keyword>
<keyword id="KW-0804">Transcription</keyword>
<keyword id="KW-0805">Transcription regulation</keyword>
<dbReference type="EMBL" id="CU928161">
    <property type="protein sequence ID" value="CAR04829.1"/>
    <property type="molecule type" value="Genomic_DNA"/>
</dbReference>
<dbReference type="RefSeq" id="WP_000074795.1">
    <property type="nucleotide sequence ID" value="NC_011742.1"/>
</dbReference>
<dbReference type="SMR" id="B7MBY8"/>
<dbReference type="KEGG" id="ecz:ECS88_3603"/>
<dbReference type="HOGENOM" id="CLU_017584_9_1_6"/>
<dbReference type="Proteomes" id="UP000000747">
    <property type="component" value="Chromosome"/>
</dbReference>
<dbReference type="GO" id="GO:0003677">
    <property type="term" value="F:DNA binding"/>
    <property type="evidence" value="ECO:0007669"/>
    <property type="project" value="UniProtKB-KW"/>
</dbReference>
<dbReference type="GO" id="GO:0003700">
    <property type="term" value="F:DNA-binding transcription factor activity"/>
    <property type="evidence" value="ECO:0007669"/>
    <property type="project" value="UniProtKB-UniRule"/>
</dbReference>
<dbReference type="GO" id="GO:0045892">
    <property type="term" value="P:negative regulation of DNA-templated transcription"/>
    <property type="evidence" value="ECO:0007669"/>
    <property type="project" value="UniProtKB-UniRule"/>
</dbReference>
<dbReference type="CDD" id="cd07377">
    <property type="entry name" value="WHTH_GntR"/>
    <property type="match status" value="1"/>
</dbReference>
<dbReference type="FunFam" id="1.10.10.10:FF:000150">
    <property type="entry name" value="HTH-type transcriptional repressor NanR"/>
    <property type="match status" value="1"/>
</dbReference>
<dbReference type="FunFam" id="1.20.120.530:FF:000006">
    <property type="entry name" value="HTH-type transcriptional repressor NanR"/>
    <property type="match status" value="1"/>
</dbReference>
<dbReference type="Gene3D" id="1.20.120.530">
    <property type="entry name" value="GntR ligand-binding domain-like"/>
    <property type="match status" value="1"/>
</dbReference>
<dbReference type="Gene3D" id="1.10.10.10">
    <property type="entry name" value="Winged helix-like DNA-binding domain superfamily/Winged helix DNA-binding domain"/>
    <property type="match status" value="1"/>
</dbReference>
<dbReference type="HAMAP" id="MF_01236">
    <property type="entry name" value="HTH_NanR"/>
    <property type="match status" value="1"/>
</dbReference>
<dbReference type="InterPro" id="IPR011711">
    <property type="entry name" value="GntR_C"/>
</dbReference>
<dbReference type="InterPro" id="IPR008920">
    <property type="entry name" value="TF_FadR/GntR_C"/>
</dbReference>
<dbReference type="InterPro" id="IPR000524">
    <property type="entry name" value="Tscrpt_reg_HTH_GntR"/>
</dbReference>
<dbReference type="InterPro" id="IPR023730">
    <property type="entry name" value="Tscrpt_reg_NanR"/>
</dbReference>
<dbReference type="InterPro" id="IPR036388">
    <property type="entry name" value="WH-like_DNA-bd_sf"/>
</dbReference>
<dbReference type="InterPro" id="IPR036390">
    <property type="entry name" value="WH_DNA-bd_sf"/>
</dbReference>
<dbReference type="NCBIfam" id="NF003011">
    <property type="entry name" value="PRK03837.1"/>
    <property type="match status" value="1"/>
</dbReference>
<dbReference type="PANTHER" id="PTHR43537:SF53">
    <property type="entry name" value="HTH-TYPE TRANSCRIPTIONAL REPRESSOR NANR"/>
    <property type="match status" value="1"/>
</dbReference>
<dbReference type="PANTHER" id="PTHR43537">
    <property type="entry name" value="TRANSCRIPTIONAL REGULATOR, GNTR FAMILY"/>
    <property type="match status" value="1"/>
</dbReference>
<dbReference type="Pfam" id="PF07729">
    <property type="entry name" value="FCD"/>
    <property type="match status" value="1"/>
</dbReference>
<dbReference type="Pfam" id="PF00392">
    <property type="entry name" value="GntR"/>
    <property type="match status" value="1"/>
</dbReference>
<dbReference type="PRINTS" id="PR00035">
    <property type="entry name" value="HTHGNTR"/>
</dbReference>
<dbReference type="SMART" id="SM00895">
    <property type="entry name" value="FCD"/>
    <property type="match status" value="1"/>
</dbReference>
<dbReference type="SMART" id="SM00345">
    <property type="entry name" value="HTH_GNTR"/>
    <property type="match status" value="1"/>
</dbReference>
<dbReference type="SUPFAM" id="SSF48008">
    <property type="entry name" value="GntR ligand-binding domain-like"/>
    <property type="match status" value="1"/>
</dbReference>
<dbReference type="SUPFAM" id="SSF46785">
    <property type="entry name" value="Winged helix' DNA-binding domain"/>
    <property type="match status" value="1"/>
</dbReference>
<dbReference type="PROSITE" id="PS50949">
    <property type="entry name" value="HTH_GNTR"/>
    <property type="match status" value="1"/>
</dbReference>